<protein>
    <recommendedName>
        <fullName>Extracellular protease</fullName>
        <ecNumber>3.4.21.-</ecNumber>
    </recommendedName>
</protein>
<sequence>MSTASLRKRTGSLTILGASALTSLLLAMPAFAGEVYLDGLATAQTHQKFIVTYKDGSTALASPSALTTSLRTAARAVPAKAGKALGLNSVRRLALGPELVRADRALDRAEAETLMRQLAADPNVQSVEVDQILHATLTPNDTRLSEQWAFGTTNAGLNIRPAWDKATGSGTVVAVIDTGITSHADLNANILAGYDFISDATTARDGNGRDSNAADEGDWYAANECGAGIPAASSSWHGTHVAGTVAAVTNNTTGVAGTAYGAKVVPVRVLGKCGGSLSDIADAIVWASGGTVSGIPANANPAEVINMSLGGGGSCSTTMQNAINGAVSRGTTVVVAAGNDASNVSGSLPANCANVIAVAATTSAGAKASYSNFGTGIDVSAPGSSILSTLNSGTTTPGSASYASYNGTSMASPHVAGVVALVQSVAPTALTPAAVETLLKNTARALPGACSGGCGAGIVNADAAVTAAINGGSGGGGGGGNTLTNGTPVTGLGAATGAELNYTITVPAGSGTLTVTTSGGSGDADLYVRAGSAPTDSAYTCRPYRSGNAETCTITAPSGTYYVRLKAYSTFSGVTLRASY</sequence>
<comment type="subcellular location">
    <subcellularLocation>
        <location>Secreted</location>
    </subcellularLocation>
</comment>
<comment type="similarity">
    <text evidence="4">Belongs to the peptidase S8 family.</text>
</comment>
<keyword id="KW-1015">Disulfide bond</keyword>
<keyword id="KW-0378">Hydrolase</keyword>
<keyword id="KW-0645">Protease</keyword>
<keyword id="KW-1185">Reference proteome</keyword>
<keyword id="KW-0964">Secreted</keyword>
<keyword id="KW-0720">Serine protease</keyword>
<keyword id="KW-0732">Signal</keyword>
<keyword id="KW-0865">Zymogen</keyword>
<reference key="1">
    <citation type="journal article" date="1990" name="Mol. Gen. Genet.">
        <title>A multipurpose broad host range cloning vector and its use to characterise an extracellular protease gene of Xanthomonas campestris pathovar campestris.</title>
        <authorList>
            <person name="Liu Y.-N."/>
            <person name="Tang J.-L."/>
            <person name="Clarke B.R."/>
            <person name="Dow J.M."/>
            <person name="Daniels M.J."/>
        </authorList>
    </citation>
    <scope>NUCLEOTIDE SEQUENCE [GENOMIC DNA]</scope>
</reference>
<reference key="2">
    <citation type="journal article" date="2002" name="Nature">
        <title>Comparison of the genomes of two Xanthomonas pathogens with differing host specificities.</title>
        <authorList>
            <person name="da Silva A.C.R."/>
            <person name="Ferro J.A."/>
            <person name="Reinach F.C."/>
            <person name="Farah C.S."/>
            <person name="Furlan L.R."/>
            <person name="Quaggio R.B."/>
            <person name="Monteiro-Vitorello C.B."/>
            <person name="Van Sluys M.A."/>
            <person name="Almeida N.F. Jr."/>
            <person name="Alves L.M.C."/>
            <person name="do Amaral A.M."/>
            <person name="Bertolini M.C."/>
            <person name="Camargo L.E.A."/>
            <person name="Camarotte G."/>
            <person name="Cannavan F."/>
            <person name="Cardozo J."/>
            <person name="Chambergo F."/>
            <person name="Ciapina L.P."/>
            <person name="Cicarelli R.M.B."/>
            <person name="Coutinho L.L."/>
            <person name="Cursino-Santos J.R."/>
            <person name="El-Dorry H."/>
            <person name="Faria J.B."/>
            <person name="Ferreira A.J.S."/>
            <person name="Ferreira R.C.C."/>
            <person name="Ferro M.I.T."/>
            <person name="Formighieri E.F."/>
            <person name="Franco M.C."/>
            <person name="Greggio C.C."/>
            <person name="Gruber A."/>
            <person name="Katsuyama A.M."/>
            <person name="Kishi L.T."/>
            <person name="Leite R.P."/>
            <person name="Lemos E.G.M."/>
            <person name="Lemos M.V.F."/>
            <person name="Locali E.C."/>
            <person name="Machado M.A."/>
            <person name="Madeira A.M.B.N."/>
            <person name="Martinez-Rossi N.M."/>
            <person name="Martins E.C."/>
            <person name="Meidanis J."/>
            <person name="Menck C.F.M."/>
            <person name="Miyaki C.Y."/>
            <person name="Moon D.H."/>
            <person name="Moreira L.M."/>
            <person name="Novo M.T.M."/>
            <person name="Okura V.K."/>
            <person name="Oliveira M.C."/>
            <person name="Oliveira V.R."/>
            <person name="Pereira H.A."/>
            <person name="Rossi A."/>
            <person name="Sena J.A.D."/>
            <person name="Silva C."/>
            <person name="de Souza R.F."/>
            <person name="Spinola L.A.F."/>
            <person name="Takita M.A."/>
            <person name="Tamura R.E."/>
            <person name="Teixeira E.C."/>
            <person name="Tezza R.I.D."/>
            <person name="Trindade dos Santos M."/>
            <person name="Truffi D."/>
            <person name="Tsai S.M."/>
            <person name="White F.F."/>
            <person name="Setubal J.C."/>
            <person name="Kitajima J.P."/>
        </authorList>
    </citation>
    <scope>NUCLEOTIDE SEQUENCE [LARGE SCALE GENOMIC DNA]</scope>
    <source>
        <strain>ATCC 33913 / DSM 3586 / NCPPB 528 / LMG 568 / P 25</strain>
    </source>
</reference>
<organism>
    <name type="scientific">Xanthomonas campestris pv. campestris (strain ATCC 33913 / DSM 3586 / NCPPB 528 / LMG 568 / P 25)</name>
    <dbReference type="NCBI Taxonomy" id="190485"/>
    <lineage>
        <taxon>Bacteria</taxon>
        <taxon>Pseudomonadati</taxon>
        <taxon>Pseudomonadota</taxon>
        <taxon>Gammaproteobacteria</taxon>
        <taxon>Lysobacterales</taxon>
        <taxon>Lysobacteraceae</taxon>
        <taxon>Xanthomonas</taxon>
    </lineage>
</organism>
<feature type="signal peptide" evidence="2">
    <location>
        <begin position="1"/>
        <end position="32"/>
    </location>
</feature>
<feature type="propeptide" id="PRO_0000027018" evidence="2">
    <location>
        <begin position="33"/>
        <end position="136" status="uncertain"/>
    </location>
</feature>
<feature type="chain" id="PRO_0000027019" description="Extracellular protease">
    <location>
        <begin position="137" status="uncertain"/>
        <end position="580"/>
    </location>
</feature>
<feature type="domain" description="Peptidase S8" evidence="3">
    <location>
        <begin position="147"/>
        <end position="465"/>
    </location>
</feature>
<feature type="active site" description="Charge relay system" evidence="3">
    <location>
        <position position="177"/>
    </location>
</feature>
<feature type="active site" description="Charge relay system" evidence="3">
    <location>
        <position position="237"/>
    </location>
</feature>
<feature type="active site" description="Charge relay system" evidence="3">
    <location>
        <position position="409"/>
    </location>
</feature>
<feature type="disulfide bond" evidence="1">
    <location>
        <begin position="225"/>
        <end position="273"/>
    </location>
</feature>
<feature type="disulfide bond" evidence="1">
    <location>
        <begin position="315"/>
        <end position="352"/>
    </location>
</feature>
<feature type="disulfide bond" evidence="2">
    <location>
        <begin position="450"/>
        <end position="454"/>
    </location>
</feature>
<evidence type="ECO:0000250" key="1"/>
<evidence type="ECO:0000255" key="2"/>
<evidence type="ECO:0000255" key="3">
    <source>
        <dbReference type="PROSITE-ProRule" id="PRU01240"/>
    </source>
</evidence>
<evidence type="ECO:0000305" key="4"/>
<gene>
    <name type="ordered locus">XCC0851</name>
</gene>
<proteinExistence type="inferred from homology"/>
<accession>P23314</accession>
<dbReference type="EC" id="3.4.21.-"/>
<dbReference type="EMBL" id="X51635">
    <property type="protein sequence ID" value="CAA35962.1"/>
    <property type="molecule type" value="Genomic_DNA"/>
</dbReference>
<dbReference type="EMBL" id="AE008922">
    <property type="protein sequence ID" value="AAM40166.1"/>
    <property type="molecule type" value="Genomic_DNA"/>
</dbReference>
<dbReference type="PIR" id="S11890">
    <property type="entry name" value="S11890"/>
</dbReference>
<dbReference type="RefSeq" id="NP_636242.1">
    <property type="nucleotide sequence ID" value="NC_003902.1"/>
</dbReference>
<dbReference type="RefSeq" id="WP_011036087.1">
    <property type="nucleotide sequence ID" value="NC_003902.1"/>
</dbReference>
<dbReference type="SMR" id="P23314"/>
<dbReference type="STRING" id="190485.XCC0851"/>
<dbReference type="MEROPS" id="S08.110"/>
<dbReference type="EnsemblBacteria" id="AAM40166">
    <property type="protein sequence ID" value="AAM40166"/>
    <property type="gene ID" value="XCC0851"/>
</dbReference>
<dbReference type="KEGG" id="xcc:XCC0851"/>
<dbReference type="PATRIC" id="fig|190485.4.peg.926"/>
<dbReference type="eggNOG" id="COG1404">
    <property type="taxonomic scope" value="Bacteria"/>
</dbReference>
<dbReference type="HOGENOM" id="CLU_011263_8_2_6"/>
<dbReference type="OrthoDB" id="9790784at2"/>
<dbReference type="Proteomes" id="UP000001010">
    <property type="component" value="Chromosome"/>
</dbReference>
<dbReference type="GO" id="GO:0005576">
    <property type="term" value="C:extracellular region"/>
    <property type="evidence" value="ECO:0007669"/>
    <property type="project" value="UniProtKB-SubCell"/>
</dbReference>
<dbReference type="GO" id="GO:0004252">
    <property type="term" value="F:serine-type endopeptidase activity"/>
    <property type="evidence" value="ECO:0000318"/>
    <property type="project" value="GO_Central"/>
</dbReference>
<dbReference type="GO" id="GO:0006508">
    <property type="term" value="P:proteolysis"/>
    <property type="evidence" value="ECO:0007669"/>
    <property type="project" value="UniProtKB-KW"/>
</dbReference>
<dbReference type="CDD" id="cd07496">
    <property type="entry name" value="Peptidases_S8_13"/>
    <property type="match status" value="1"/>
</dbReference>
<dbReference type="FunFam" id="2.60.120.380:FF:000013">
    <property type="entry name" value="Alkaline serine protease"/>
    <property type="match status" value="1"/>
</dbReference>
<dbReference type="FunFam" id="3.40.50.200:FF:000022">
    <property type="entry name" value="Extracellular protease"/>
    <property type="match status" value="1"/>
</dbReference>
<dbReference type="Gene3D" id="2.60.120.380">
    <property type="match status" value="1"/>
</dbReference>
<dbReference type="Gene3D" id="3.40.50.200">
    <property type="entry name" value="Peptidase S8/S53 domain"/>
    <property type="match status" value="1"/>
</dbReference>
<dbReference type="InterPro" id="IPR007280">
    <property type="entry name" value="Peptidase_C_arc/bac"/>
</dbReference>
<dbReference type="InterPro" id="IPR000209">
    <property type="entry name" value="Peptidase_S8/S53_dom"/>
</dbReference>
<dbReference type="InterPro" id="IPR036852">
    <property type="entry name" value="Peptidase_S8/S53_dom_sf"/>
</dbReference>
<dbReference type="InterPro" id="IPR023827">
    <property type="entry name" value="Peptidase_S8_Asp-AS"/>
</dbReference>
<dbReference type="InterPro" id="IPR022398">
    <property type="entry name" value="Peptidase_S8_His-AS"/>
</dbReference>
<dbReference type="InterPro" id="IPR023828">
    <property type="entry name" value="Peptidase_S8_Ser-AS"/>
</dbReference>
<dbReference type="InterPro" id="IPR050131">
    <property type="entry name" value="Peptidase_S8_subtilisin-like"/>
</dbReference>
<dbReference type="InterPro" id="IPR015500">
    <property type="entry name" value="Peptidase_S8_subtilisin-rel"/>
</dbReference>
<dbReference type="InterPro" id="IPR034176">
    <property type="entry name" value="Peptidases_S8_13"/>
</dbReference>
<dbReference type="PANTHER" id="PTHR43806:SF11">
    <property type="entry name" value="CEREVISIN-RELATED"/>
    <property type="match status" value="1"/>
</dbReference>
<dbReference type="PANTHER" id="PTHR43806">
    <property type="entry name" value="PEPTIDASE S8"/>
    <property type="match status" value="1"/>
</dbReference>
<dbReference type="Pfam" id="PF00082">
    <property type="entry name" value="Peptidase_S8"/>
    <property type="match status" value="1"/>
</dbReference>
<dbReference type="Pfam" id="PF04151">
    <property type="entry name" value="PPC"/>
    <property type="match status" value="1"/>
</dbReference>
<dbReference type="PRINTS" id="PR00723">
    <property type="entry name" value="SUBTILISIN"/>
</dbReference>
<dbReference type="SUPFAM" id="SSF89260">
    <property type="entry name" value="Collagen-binding domain"/>
    <property type="match status" value="1"/>
</dbReference>
<dbReference type="SUPFAM" id="SSF52743">
    <property type="entry name" value="Subtilisin-like"/>
    <property type="match status" value="1"/>
</dbReference>
<dbReference type="PROSITE" id="PS51892">
    <property type="entry name" value="SUBTILASE"/>
    <property type="match status" value="1"/>
</dbReference>
<dbReference type="PROSITE" id="PS00136">
    <property type="entry name" value="SUBTILASE_ASP"/>
    <property type="match status" value="1"/>
</dbReference>
<dbReference type="PROSITE" id="PS00137">
    <property type="entry name" value="SUBTILASE_HIS"/>
    <property type="match status" value="1"/>
</dbReference>
<dbReference type="PROSITE" id="PS00138">
    <property type="entry name" value="SUBTILASE_SER"/>
    <property type="match status" value="1"/>
</dbReference>
<name>EXPR_XANCP</name>